<protein>
    <recommendedName>
        <fullName evidence="1">Aspartate--ammonia ligase</fullName>
        <ecNumber evidence="1">6.3.1.1</ecNumber>
    </recommendedName>
    <alternativeName>
        <fullName evidence="1">Asparagine synthetase A</fullName>
    </alternativeName>
</protein>
<organism>
    <name type="scientific">Yersinia pseudotuberculosis serotype O:1b (strain IP 31758)</name>
    <dbReference type="NCBI Taxonomy" id="349747"/>
    <lineage>
        <taxon>Bacteria</taxon>
        <taxon>Pseudomonadati</taxon>
        <taxon>Pseudomonadota</taxon>
        <taxon>Gammaproteobacteria</taxon>
        <taxon>Enterobacterales</taxon>
        <taxon>Yersiniaceae</taxon>
        <taxon>Yersinia</taxon>
    </lineage>
</organism>
<keyword id="KW-0028">Amino-acid biosynthesis</keyword>
<keyword id="KW-0061">Asparagine biosynthesis</keyword>
<keyword id="KW-0067">ATP-binding</keyword>
<keyword id="KW-0963">Cytoplasm</keyword>
<keyword id="KW-0436">Ligase</keyword>
<keyword id="KW-0547">Nucleotide-binding</keyword>
<proteinExistence type="inferred from homology"/>
<evidence type="ECO:0000255" key="1">
    <source>
        <dbReference type="HAMAP-Rule" id="MF_00555"/>
    </source>
</evidence>
<feature type="chain" id="PRO_1000061108" description="Aspartate--ammonia ligase">
    <location>
        <begin position="1"/>
        <end position="330"/>
    </location>
</feature>
<gene>
    <name evidence="1" type="primary">asnA</name>
    <name type="ordered locus">YpsIP31758_0003</name>
</gene>
<reference key="1">
    <citation type="journal article" date="2007" name="PLoS Genet.">
        <title>The complete genome sequence of Yersinia pseudotuberculosis IP31758, the causative agent of Far East scarlet-like fever.</title>
        <authorList>
            <person name="Eppinger M."/>
            <person name="Rosovitz M.J."/>
            <person name="Fricke W.F."/>
            <person name="Rasko D.A."/>
            <person name="Kokorina G."/>
            <person name="Fayolle C."/>
            <person name="Lindler L.E."/>
            <person name="Carniel E."/>
            <person name="Ravel J."/>
        </authorList>
    </citation>
    <scope>NUCLEOTIDE SEQUENCE [LARGE SCALE GENOMIC DNA]</scope>
    <source>
        <strain>IP 31758</strain>
    </source>
</reference>
<name>ASNA_YERP3</name>
<comment type="catalytic activity">
    <reaction evidence="1">
        <text>L-aspartate + NH4(+) + ATP = L-asparagine + AMP + diphosphate + H(+)</text>
        <dbReference type="Rhea" id="RHEA:11372"/>
        <dbReference type="ChEBI" id="CHEBI:15378"/>
        <dbReference type="ChEBI" id="CHEBI:28938"/>
        <dbReference type="ChEBI" id="CHEBI:29991"/>
        <dbReference type="ChEBI" id="CHEBI:30616"/>
        <dbReference type="ChEBI" id="CHEBI:33019"/>
        <dbReference type="ChEBI" id="CHEBI:58048"/>
        <dbReference type="ChEBI" id="CHEBI:456215"/>
        <dbReference type="EC" id="6.3.1.1"/>
    </reaction>
</comment>
<comment type="pathway">
    <text evidence="1">Amino-acid biosynthesis; L-asparagine biosynthesis; L-asparagine from L-aspartate (ammonia route): step 1/1.</text>
</comment>
<comment type="subcellular location">
    <subcellularLocation>
        <location evidence="1">Cytoplasm</location>
    </subcellularLocation>
</comment>
<comment type="similarity">
    <text evidence="1">Belongs to the class-II aminoacyl-tRNA synthetase family. AsnA subfamily.</text>
</comment>
<dbReference type="EC" id="6.3.1.1" evidence="1"/>
<dbReference type="EMBL" id="CP000720">
    <property type="protein sequence ID" value="ABS46869.1"/>
    <property type="molecule type" value="Genomic_DNA"/>
</dbReference>
<dbReference type="RefSeq" id="WP_002212256.1">
    <property type="nucleotide sequence ID" value="NC_009708.1"/>
</dbReference>
<dbReference type="SMR" id="A7FCM9"/>
<dbReference type="GeneID" id="57974591"/>
<dbReference type="KEGG" id="ypi:YpsIP31758_0003"/>
<dbReference type="HOGENOM" id="CLU_071543_0_0_6"/>
<dbReference type="UniPathway" id="UPA00134">
    <property type="reaction ID" value="UER00194"/>
</dbReference>
<dbReference type="Proteomes" id="UP000002412">
    <property type="component" value="Chromosome"/>
</dbReference>
<dbReference type="GO" id="GO:0005829">
    <property type="term" value="C:cytosol"/>
    <property type="evidence" value="ECO:0007669"/>
    <property type="project" value="TreeGrafter"/>
</dbReference>
<dbReference type="GO" id="GO:0004071">
    <property type="term" value="F:aspartate-ammonia ligase activity"/>
    <property type="evidence" value="ECO:0007669"/>
    <property type="project" value="UniProtKB-UniRule"/>
</dbReference>
<dbReference type="GO" id="GO:0005524">
    <property type="term" value="F:ATP binding"/>
    <property type="evidence" value="ECO:0007669"/>
    <property type="project" value="UniProtKB-UniRule"/>
</dbReference>
<dbReference type="GO" id="GO:0070981">
    <property type="term" value="P:L-asparagine biosynthetic process"/>
    <property type="evidence" value="ECO:0007669"/>
    <property type="project" value="UniProtKB-UniRule"/>
</dbReference>
<dbReference type="Gene3D" id="3.30.930.10">
    <property type="entry name" value="Bira Bifunctional Protein, Domain 2"/>
    <property type="match status" value="1"/>
</dbReference>
<dbReference type="HAMAP" id="MF_00555">
    <property type="entry name" value="AsnA"/>
    <property type="match status" value="1"/>
</dbReference>
<dbReference type="InterPro" id="IPR006195">
    <property type="entry name" value="aa-tRNA-synth_II"/>
</dbReference>
<dbReference type="InterPro" id="IPR045864">
    <property type="entry name" value="aa-tRNA-synth_II/BPL/LPL"/>
</dbReference>
<dbReference type="InterPro" id="IPR004618">
    <property type="entry name" value="AsnA"/>
</dbReference>
<dbReference type="NCBIfam" id="TIGR00669">
    <property type="entry name" value="asnA"/>
    <property type="match status" value="1"/>
</dbReference>
<dbReference type="PANTHER" id="PTHR30073">
    <property type="entry name" value="ASPARTATE--AMMONIA LIGASE"/>
    <property type="match status" value="1"/>
</dbReference>
<dbReference type="PANTHER" id="PTHR30073:SF5">
    <property type="entry name" value="ASPARTATE--AMMONIA LIGASE"/>
    <property type="match status" value="1"/>
</dbReference>
<dbReference type="Pfam" id="PF03590">
    <property type="entry name" value="AsnA"/>
    <property type="match status" value="1"/>
</dbReference>
<dbReference type="PIRSF" id="PIRSF001555">
    <property type="entry name" value="Asp_ammon_ligase"/>
    <property type="match status" value="1"/>
</dbReference>
<dbReference type="SUPFAM" id="SSF55681">
    <property type="entry name" value="Class II aaRS and biotin synthetases"/>
    <property type="match status" value="1"/>
</dbReference>
<dbReference type="PROSITE" id="PS50862">
    <property type="entry name" value="AA_TRNA_LIGASE_II"/>
    <property type="match status" value="1"/>
</dbReference>
<accession>A7FCM9</accession>
<sequence>MKKQFIQKQQQISFVKSFFSRQLEQQLGLIEVQAPILSRVGDGTQDNLSGSEKAVQVKVKSLPDSTFEVVHSLAKWKRKTLGRFDFGADQGVYTHMKALRPDEDRLSAIHSVYVDQWDWERVMGDGERNLAYLKSTVNKIYAAIKETEAAISAEFGVKPFLPDHIQFIHSESLRARFPDLDAKGRERAIAKELGAVFLIGIGGKLADGQSHDVRAPDYDDWTSPSAEGFSGLNGDIIVWNPILEDAFEISSMGIRVDAEALKRQLALTGDEDRLELEWHQSLLRGEMPQTIGGGIGQSRLVMLLLQKQHIGQVQCGVWGPEISEKVDGLL</sequence>